<protein>
    <recommendedName>
        <fullName evidence="1">Thiazole synthase</fullName>
        <ecNumber evidence="1">2.8.1.10</ecNumber>
    </recommendedName>
</protein>
<evidence type="ECO:0000255" key="1">
    <source>
        <dbReference type="HAMAP-Rule" id="MF_00443"/>
    </source>
</evidence>
<comment type="function">
    <text evidence="1">Catalyzes the rearrangement of 1-deoxy-D-xylulose 5-phosphate (DXP) to produce the thiazole phosphate moiety of thiamine. Sulfur is provided by the thiocarboxylate moiety of the carrier protein ThiS. In vitro, sulfur can be provided by H(2)S.</text>
</comment>
<comment type="catalytic activity">
    <reaction evidence="1">
        <text>[ThiS sulfur-carrier protein]-C-terminal-Gly-aminoethanethioate + 2-iminoacetate + 1-deoxy-D-xylulose 5-phosphate = [ThiS sulfur-carrier protein]-C-terminal Gly-Gly + 2-[(2R,5Z)-2-carboxy-4-methylthiazol-5(2H)-ylidene]ethyl phosphate + 2 H2O + H(+)</text>
        <dbReference type="Rhea" id="RHEA:26297"/>
        <dbReference type="Rhea" id="RHEA-COMP:12909"/>
        <dbReference type="Rhea" id="RHEA-COMP:19908"/>
        <dbReference type="ChEBI" id="CHEBI:15377"/>
        <dbReference type="ChEBI" id="CHEBI:15378"/>
        <dbReference type="ChEBI" id="CHEBI:57792"/>
        <dbReference type="ChEBI" id="CHEBI:62899"/>
        <dbReference type="ChEBI" id="CHEBI:77846"/>
        <dbReference type="ChEBI" id="CHEBI:90778"/>
        <dbReference type="ChEBI" id="CHEBI:232372"/>
        <dbReference type="EC" id="2.8.1.10"/>
    </reaction>
</comment>
<comment type="pathway">
    <text evidence="1">Cofactor biosynthesis; thiamine diphosphate biosynthesis.</text>
</comment>
<comment type="subunit">
    <text evidence="1">Homotetramer. Forms heterodimers with either ThiH or ThiS.</text>
</comment>
<comment type="subcellular location">
    <subcellularLocation>
        <location evidence="1">Cytoplasm</location>
    </subcellularLocation>
</comment>
<comment type="similarity">
    <text evidence="1">Belongs to the ThiG family.</text>
</comment>
<keyword id="KW-0963">Cytoplasm</keyword>
<keyword id="KW-1185">Reference proteome</keyword>
<keyword id="KW-0704">Schiff base</keyword>
<keyword id="KW-0784">Thiamine biosynthesis</keyword>
<keyword id="KW-0808">Transferase</keyword>
<organism>
    <name type="scientific">Shewanella denitrificans (strain OS217 / ATCC BAA-1090 / DSM 15013)</name>
    <dbReference type="NCBI Taxonomy" id="318161"/>
    <lineage>
        <taxon>Bacteria</taxon>
        <taxon>Pseudomonadati</taxon>
        <taxon>Pseudomonadota</taxon>
        <taxon>Gammaproteobacteria</taxon>
        <taxon>Alteromonadales</taxon>
        <taxon>Shewanellaceae</taxon>
        <taxon>Shewanella</taxon>
    </lineage>
</organism>
<dbReference type="EC" id="2.8.1.10" evidence="1"/>
<dbReference type="EMBL" id="CP000302">
    <property type="protein sequence ID" value="ABE55058.1"/>
    <property type="molecule type" value="Genomic_DNA"/>
</dbReference>
<dbReference type="RefSeq" id="WP_011496215.1">
    <property type="nucleotide sequence ID" value="NC_007954.1"/>
</dbReference>
<dbReference type="SMR" id="Q12NB8"/>
<dbReference type="STRING" id="318161.Sden_1774"/>
<dbReference type="KEGG" id="sdn:Sden_1774"/>
<dbReference type="eggNOG" id="COG2022">
    <property type="taxonomic scope" value="Bacteria"/>
</dbReference>
<dbReference type="HOGENOM" id="CLU_062233_1_0_6"/>
<dbReference type="OrthoDB" id="9805935at2"/>
<dbReference type="UniPathway" id="UPA00060"/>
<dbReference type="Proteomes" id="UP000001982">
    <property type="component" value="Chromosome"/>
</dbReference>
<dbReference type="GO" id="GO:0005737">
    <property type="term" value="C:cytoplasm"/>
    <property type="evidence" value="ECO:0007669"/>
    <property type="project" value="UniProtKB-SubCell"/>
</dbReference>
<dbReference type="GO" id="GO:1990107">
    <property type="term" value="F:thiazole synthase activity"/>
    <property type="evidence" value="ECO:0007669"/>
    <property type="project" value="UniProtKB-EC"/>
</dbReference>
<dbReference type="GO" id="GO:0009229">
    <property type="term" value="P:thiamine diphosphate biosynthetic process"/>
    <property type="evidence" value="ECO:0007669"/>
    <property type="project" value="UniProtKB-UniRule"/>
</dbReference>
<dbReference type="CDD" id="cd04728">
    <property type="entry name" value="ThiG"/>
    <property type="match status" value="1"/>
</dbReference>
<dbReference type="FunFam" id="3.20.20.70:FF:000049">
    <property type="entry name" value="Thiazole synthase"/>
    <property type="match status" value="1"/>
</dbReference>
<dbReference type="Gene3D" id="3.20.20.70">
    <property type="entry name" value="Aldolase class I"/>
    <property type="match status" value="1"/>
</dbReference>
<dbReference type="HAMAP" id="MF_00443">
    <property type="entry name" value="ThiG"/>
    <property type="match status" value="1"/>
</dbReference>
<dbReference type="InterPro" id="IPR013785">
    <property type="entry name" value="Aldolase_TIM"/>
</dbReference>
<dbReference type="InterPro" id="IPR033983">
    <property type="entry name" value="Thiazole_synthase_ThiG"/>
</dbReference>
<dbReference type="InterPro" id="IPR008867">
    <property type="entry name" value="ThiG"/>
</dbReference>
<dbReference type="PANTHER" id="PTHR34266">
    <property type="entry name" value="THIAZOLE SYNTHASE"/>
    <property type="match status" value="1"/>
</dbReference>
<dbReference type="PANTHER" id="PTHR34266:SF2">
    <property type="entry name" value="THIAZOLE SYNTHASE"/>
    <property type="match status" value="1"/>
</dbReference>
<dbReference type="Pfam" id="PF05690">
    <property type="entry name" value="ThiG"/>
    <property type="match status" value="1"/>
</dbReference>
<dbReference type="SUPFAM" id="SSF110399">
    <property type="entry name" value="ThiG-like"/>
    <property type="match status" value="1"/>
</dbReference>
<reference key="1">
    <citation type="submission" date="2006-03" db="EMBL/GenBank/DDBJ databases">
        <title>Complete sequence of Shewanella denitrificans OS217.</title>
        <authorList>
            <consortium name="US DOE Joint Genome Institute"/>
            <person name="Copeland A."/>
            <person name="Lucas S."/>
            <person name="Lapidus A."/>
            <person name="Barry K."/>
            <person name="Detter J.C."/>
            <person name="Glavina del Rio T."/>
            <person name="Hammon N."/>
            <person name="Israni S."/>
            <person name="Dalin E."/>
            <person name="Tice H."/>
            <person name="Pitluck S."/>
            <person name="Brettin T."/>
            <person name="Bruce D."/>
            <person name="Han C."/>
            <person name="Tapia R."/>
            <person name="Gilna P."/>
            <person name="Kiss H."/>
            <person name="Schmutz J."/>
            <person name="Larimer F."/>
            <person name="Land M."/>
            <person name="Hauser L."/>
            <person name="Kyrpides N."/>
            <person name="Lykidis A."/>
            <person name="Richardson P."/>
        </authorList>
    </citation>
    <scope>NUCLEOTIDE SEQUENCE [LARGE SCALE GENOMIC DNA]</scope>
    <source>
        <strain>OS217 / ATCC BAA-1090 / DSM 15013</strain>
    </source>
</reference>
<proteinExistence type="inferred from homology"/>
<gene>
    <name evidence="1" type="primary">thiG</name>
    <name type="ordered locus">Sden_1774</name>
</gene>
<sequence>MFTLADHTFSSRLLTGTGKFTNSHTMLASIVASESQIVTLAMKRIDLKLGQDDILTPLLAQGLTLLPNTSGARNAKEAIFAAELARDLLDTHWLKLEIHPDPKYLMPDPIETLLAAEKLCQMGFKVLPYVHADPVLCRRLEEVGCAAVMPLASPIGSNQGLATEAFLKIIIEQAKVPVIVDAGLGAPSQACRAMEMGADAVLVNTAIASSRSPIIMAKCFADAVKAGREAYLAGLGQVQPHASHTSPLTGFLQQMPAENTNTVEPL</sequence>
<accession>Q12NB8</accession>
<name>THIG_SHEDO</name>
<feature type="chain" id="PRO_1000026042" description="Thiazole synthase">
    <location>
        <begin position="1"/>
        <end position="266"/>
    </location>
</feature>
<feature type="active site" description="Schiff-base intermediate with DXP" evidence="1">
    <location>
        <position position="95"/>
    </location>
</feature>
<feature type="binding site" evidence="1">
    <location>
        <position position="156"/>
    </location>
    <ligand>
        <name>1-deoxy-D-xylulose 5-phosphate</name>
        <dbReference type="ChEBI" id="CHEBI:57792"/>
    </ligand>
</feature>
<feature type="binding site" evidence="1">
    <location>
        <begin position="182"/>
        <end position="183"/>
    </location>
    <ligand>
        <name>1-deoxy-D-xylulose 5-phosphate</name>
        <dbReference type="ChEBI" id="CHEBI:57792"/>
    </ligand>
</feature>
<feature type="binding site" evidence="1">
    <location>
        <begin position="204"/>
        <end position="205"/>
    </location>
    <ligand>
        <name>1-deoxy-D-xylulose 5-phosphate</name>
        <dbReference type="ChEBI" id="CHEBI:57792"/>
    </ligand>
</feature>